<reference key="1">
    <citation type="journal article" date="2007" name="Genome Res.">
        <title>Reductive evolution and niche adaptation inferred from the genome of Mycobacterium ulcerans, the causative agent of Buruli ulcer.</title>
        <authorList>
            <person name="Stinear T.P."/>
            <person name="Seemann T."/>
            <person name="Pidot S."/>
            <person name="Frigui W."/>
            <person name="Reysset G."/>
            <person name="Garnier T."/>
            <person name="Meurice G."/>
            <person name="Simon D."/>
            <person name="Bouchier C."/>
            <person name="Ma L."/>
            <person name="Tichit M."/>
            <person name="Porter J.L."/>
            <person name="Ryan J."/>
            <person name="Johnson P.D.R."/>
            <person name="Davies J.K."/>
            <person name="Jenkin G.A."/>
            <person name="Small P.L.C."/>
            <person name="Jones L.M."/>
            <person name="Tekaia F."/>
            <person name="Laval F."/>
            <person name="Daffe M."/>
            <person name="Parkhill J."/>
            <person name="Cole S.T."/>
        </authorList>
    </citation>
    <scope>NUCLEOTIDE SEQUENCE [LARGE SCALE GENOMIC DNA]</scope>
    <source>
        <strain>Agy99</strain>
    </source>
</reference>
<name>PYRB_MYCUA</name>
<comment type="function">
    <text evidence="1">Catalyzes the condensation of carbamoyl phosphate and aspartate to form carbamoyl aspartate and inorganic phosphate, the committed step in the de novo pyrimidine nucleotide biosynthesis pathway.</text>
</comment>
<comment type="catalytic activity">
    <reaction evidence="1">
        <text>carbamoyl phosphate + L-aspartate = N-carbamoyl-L-aspartate + phosphate + H(+)</text>
        <dbReference type="Rhea" id="RHEA:20013"/>
        <dbReference type="ChEBI" id="CHEBI:15378"/>
        <dbReference type="ChEBI" id="CHEBI:29991"/>
        <dbReference type="ChEBI" id="CHEBI:32814"/>
        <dbReference type="ChEBI" id="CHEBI:43474"/>
        <dbReference type="ChEBI" id="CHEBI:58228"/>
        <dbReference type="EC" id="2.1.3.2"/>
    </reaction>
</comment>
<comment type="pathway">
    <text evidence="1">Pyrimidine metabolism; UMP biosynthesis via de novo pathway; (S)-dihydroorotate from bicarbonate: step 2/3.</text>
</comment>
<comment type="subunit">
    <text evidence="1">Heterododecamer (2C3:3R2) of six catalytic PyrB chains organized as two trimers (C3), and six regulatory PyrI chains organized as three dimers (R2).</text>
</comment>
<comment type="similarity">
    <text evidence="1">Belongs to the aspartate/ornithine carbamoyltransferase superfamily. ATCase family.</text>
</comment>
<keyword id="KW-0665">Pyrimidine biosynthesis</keyword>
<keyword id="KW-0808">Transferase</keyword>
<protein>
    <recommendedName>
        <fullName evidence="1">Aspartate carbamoyltransferase catalytic subunit</fullName>
        <ecNumber evidence="1">2.1.3.2</ecNumber>
    </recommendedName>
    <alternativeName>
        <fullName evidence="1">Aspartate transcarbamylase</fullName>
        <shortName evidence="1">ATCase</shortName>
    </alternativeName>
</protein>
<dbReference type="EC" id="2.1.3.2" evidence="1"/>
<dbReference type="EMBL" id="CP000325">
    <property type="protein sequence ID" value="ABL04257.1"/>
    <property type="molecule type" value="Genomic_DNA"/>
</dbReference>
<dbReference type="RefSeq" id="WP_011739877.1">
    <property type="nucleotide sequence ID" value="NC_008611.1"/>
</dbReference>
<dbReference type="SMR" id="A0PPI8"/>
<dbReference type="KEGG" id="mul:MUL_1780"/>
<dbReference type="eggNOG" id="COG0540">
    <property type="taxonomic scope" value="Bacteria"/>
</dbReference>
<dbReference type="HOGENOM" id="CLU_043846_2_0_11"/>
<dbReference type="UniPathway" id="UPA00070">
    <property type="reaction ID" value="UER00116"/>
</dbReference>
<dbReference type="Proteomes" id="UP000000765">
    <property type="component" value="Chromosome"/>
</dbReference>
<dbReference type="GO" id="GO:0005829">
    <property type="term" value="C:cytosol"/>
    <property type="evidence" value="ECO:0007669"/>
    <property type="project" value="TreeGrafter"/>
</dbReference>
<dbReference type="GO" id="GO:0016597">
    <property type="term" value="F:amino acid binding"/>
    <property type="evidence" value="ECO:0007669"/>
    <property type="project" value="InterPro"/>
</dbReference>
<dbReference type="GO" id="GO:0004070">
    <property type="term" value="F:aspartate carbamoyltransferase activity"/>
    <property type="evidence" value="ECO:0007669"/>
    <property type="project" value="UniProtKB-UniRule"/>
</dbReference>
<dbReference type="GO" id="GO:0006207">
    <property type="term" value="P:'de novo' pyrimidine nucleobase biosynthetic process"/>
    <property type="evidence" value="ECO:0007669"/>
    <property type="project" value="InterPro"/>
</dbReference>
<dbReference type="GO" id="GO:0044205">
    <property type="term" value="P:'de novo' UMP biosynthetic process"/>
    <property type="evidence" value="ECO:0007669"/>
    <property type="project" value="UniProtKB-UniRule"/>
</dbReference>
<dbReference type="GO" id="GO:0006520">
    <property type="term" value="P:amino acid metabolic process"/>
    <property type="evidence" value="ECO:0007669"/>
    <property type="project" value="InterPro"/>
</dbReference>
<dbReference type="FunFam" id="3.40.50.1370:FF:000007">
    <property type="entry name" value="Aspartate carbamoyltransferase"/>
    <property type="match status" value="1"/>
</dbReference>
<dbReference type="Gene3D" id="3.40.50.1370">
    <property type="entry name" value="Aspartate/ornithine carbamoyltransferase"/>
    <property type="match status" value="2"/>
</dbReference>
<dbReference type="HAMAP" id="MF_00001">
    <property type="entry name" value="Asp_carb_tr"/>
    <property type="match status" value="1"/>
</dbReference>
<dbReference type="InterPro" id="IPR006132">
    <property type="entry name" value="Asp/Orn_carbamoyltranf_P-bd"/>
</dbReference>
<dbReference type="InterPro" id="IPR006130">
    <property type="entry name" value="Asp/Orn_carbamoylTrfase"/>
</dbReference>
<dbReference type="InterPro" id="IPR036901">
    <property type="entry name" value="Asp/Orn_carbamoylTrfase_sf"/>
</dbReference>
<dbReference type="InterPro" id="IPR002082">
    <property type="entry name" value="Asp_carbamoyltransf"/>
</dbReference>
<dbReference type="InterPro" id="IPR006131">
    <property type="entry name" value="Asp_carbamoyltransf_Asp/Orn-bd"/>
</dbReference>
<dbReference type="NCBIfam" id="TIGR00670">
    <property type="entry name" value="asp_carb_tr"/>
    <property type="match status" value="1"/>
</dbReference>
<dbReference type="NCBIfam" id="NF002032">
    <property type="entry name" value="PRK00856.1"/>
    <property type="match status" value="1"/>
</dbReference>
<dbReference type="PANTHER" id="PTHR45753:SF6">
    <property type="entry name" value="ASPARTATE CARBAMOYLTRANSFERASE"/>
    <property type="match status" value="1"/>
</dbReference>
<dbReference type="PANTHER" id="PTHR45753">
    <property type="entry name" value="ORNITHINE CARBAMOYLTRANSFERASE, MITOCHONDRIAL"/>
    <property type="match status" value="1"/>
</dbReference>
<dbReference type="Pfam" id="PF00185">
    <property type="entry name" value="OTCace"/>
    <property type="match status" value="1"/>
</dbReference>
<dbReference type="Pfam" id="PF02729">
    <property type="entry name" value="OTCace_N"/>
    <property type="match status" value="1"/>
</dbReference>
<dbReference type="PRINTS" id="PR00100">
    <property type="entry name" value="AOTCASE"/>
</dbReference>
<dbReference type="PRINTS" id="PR00101">
    <property type="entry name" value="ATCASE"/>
</dbReference>
<dbReference type="SUPFAM" id="SSF53671">
    <property type="entry name" value="Aspartate/ornithine carbamoyltransferase"/>
    <property type="match status" value="1"/>
</dbReference>
<dbReference type="PROSITE" id="PS00097">
    <property type="entry name" value="CARBAMOYLTRANSFERASE"/>
    <property type="match status" value="1"/>
</dbReference>
<gene>
    <name evidence="1" type="primary">pyrB</name>
    <name type="ordered locus">MUL_1780</name>
</gene>
<organism>
    <name type="scientific">Mycobacterium ulcerans (strain Agy99)</name>
    <dbReference type="NCBI Taxonomy" id="362242"/>
    <lineage>
        <taxon>Bacteria</taxon>
        <taxon>Bacillati</taxon>
        <taxon>Actinomycetota</taxon>
        <taxon>Actinomycetes</taxon>
        <taxon>Mycobacteriales</taxon>
        <taxon>Mycobacteriaceae</taxon>
        <taxon>Mycobacterium</taxon>
        <taxon>Mycobacterium ulcerans group</taxon>
    </lineage>
</organism>
<evidence type="ECO:0000255" key="1">
    <source>
        <dbReference type="HAMAP-Rule" id="MF_00001"/>
    </source>
</evidence>
<accession>A0PPI8</accession>
<proteinExistence type="inferred from homology"/>
<feature type="chain" id="PRO_0000301593" description="Aspartate carbamoyltransferase catalytic subunit">
    <location>
        <begin position="1"/>
        <end position="320"/>
    </location>
</feature>
<feature type="binding site" evidence="1">
    <location>
        <position position="57"/>
    </location>
    <ligand>
        <name>carbamoyl phosphate</name>
        <dbReference type="ChEBI" id="CHEBI:58228"/>
    </ligand>
</feature>
<feature type="binding site" evidence="1">
    <location>
        <position position="58"/>
    </location>
    <ligand>
        <name>carbamoyl phosphate</name>
        <dbReference type="ChEBI" id="CHEBI:58228"/>
    </ligand>
</feature>
<feature type="binding site" evidence="1">
    <location>
        <position position="85"/>
    </location>
    <ligand>
        <name>L-aspartate</name>
        <dbReference type="ChEBI" id="CHEBI:29991"/>
    </ligand>
</feature>
<feature type="binding site" evidence="1">
    <location>
        <position position="107"/>
    </location>
    <ligand>
        <name>carbamoyl phosphate</name>
        <dbReference type="ChEBI" id="CHEBI:58228"/>
    </ligand>
</feature>
<feature type="binding site" evidence="1">
    <location>
        <position position="141"/>
    </location>
    <ligand>
        <name>carbamoyl phosphate</name>
        <dbReference type="ChEBI" id="CHEBI:58228"/>
    </ligand>
</feature>
<feature type="binding site" evidence="1">
    <location>
        <position position="144"/>
    </location>
    <ligand>
        <name>carbamoyl phosphate</name>
        <dbReference type="ChEBI" id="CHEBI:58228"/>
    </ligand>
</feature>
<feature type="binding site" evidence="1">
    <location>
        <position position="174"/>
    </location>
    <ligand>
        <name>L-aspartate</name>
        <dbReference type="ChEBI" id="CHEBI:29991"/>
    </ligand>
</feature>
<feature type="binding site" evidence="1">
    <location>
        <position position="228"/>
    </location>
    <ligand>
        <name>L-aspartate</name>
        <dbReference type="ChEBI" id="CHEBI:29991"/>
    </ligand>
</feature>
<feature type="binding site" evidence="1">
    <location>
        <position position="269"/>
    </location>
    <ligand>
        <name>carbamoyl phosphate</name>
        <dbReference type="ChEBI" id="CHEBI:58228"/>
    </ligand>
</feature>
<feature type="binding site" evidence="1">
    <location>
        <position position="270"/>
    </location>
    <ligand>
        <name>carbamoyl phosphate</name>
        <dbReference type="ChEBI" id="CHEBI:58228"/>
    </ligand>
</feature>
<sequence>MTPRHLLAAGDLSRDDAIAILDDADRFAQALVGREVKKLPTLRGRTVVTMFYENSTRTRVSFEVAGKWMSADLINVSASGSSVSKGESLRDTALTLRAAGADALIIRHPASGAARLFADWTAGQSDGGPSVINAGDGTHEHPTQALLDALTIRQRLGGIEGRRVVIVGDILHSRVARSNVTLLHTLGAEVVLVAPPTLLPVGVADWPVTVSHDLDAELPAADAVLMLRVQAERMNGGFFPSVREYSTLYGLSDRRQAMLGGHAVVLHPGPMLRGMEIASSVADSSQSAVLQQVSNGVHIRMAVLFHVLVGLESAGEEGAA</sequence>